<dbReference type="EMBL" id="CP000034">
    <property type="protein sequence ID" value="ABB63467.1"/>
    <property type="molecule type" value="Genomic_DNA"/>
</dbReference>
<dbReference type="RefSeq" id="WP_000941212.1">
    <property type="nucleotide sequence ID" value="NC_007606.1"/>
</dbReference>
<dbReference type="RefSeq" id="YP_404958.1">
    <property type="nucleotide sequence ID" value="NC_007606.1"/>
</dbReference>
<dbReference type="SMR" id="Q32B38"/>
<dbReference type="STRING" id="300267.SDY_3489"/>
<dbReference type="EnsemblBacteria" id="ABB63467">
    <property type="protein sequence ID" value="ABB63467"/>
    <property type="gene ID" value="SDY_3489"/>
</dbReference>
<dbReference type="GeneID" id="93778674"/>
<dbReference type="KEGG" id="sdy:SDY_3489"/>
<dbReference type="PATRIC" id="fig|300267.13.peg.4142"/>
<dbReference type="HOGENOM" id="CLU_078858_2_1_6"/>
<dbReference type="Proteomes" id="UP000002716">
    <property type="component" value="Chromosome"/>
</dbReference>
<dbReference type="GO" id="GO:0022625">
    <property type="term" value="C:cytosolic large ribosomal subunit"/>
    <property type="evidence" value="ECO:0007669"/>
    <property type="project" value="TreeGrafter"/>
</dbReference>
<dbReference type="GO" id="GO:0019843">
    <property type="term" value="F:rRNA binding"/>
    <property type="evidence" value="ECO:0007669"/>
    <property type="project" value="UniProtKB-UniRule"/>
</dbReference>
<dbReference type="GO" id="GO:0003735">
    <property type="term" value="F:structural constituent of ribosome"/>
    <property type="evidence" value="ECO:0007669"/>
    <property type="project" value="InterPro"/>
</dbReference>
<dbReference type="GO" id="GO:0000049">
    <property type="term" value="F:tRNA binding"/>
    <property type="evidence" value="ECO:0007669"/>
    <property type="project" value="UniProtKB-KW"/>
</dbReference>
<dbReference type="GO" id="GO:0006412">
    <property type="term" value="P:translation"/>
    <property type="evidence" value="ECO:0007669"/>
    <property type="project" value="UniProtKB-UniRule"/>
</dbReference>
<dbReference type="CDD" id="cd01433">
    <property type="entry name" value="Ribosomal_L16_L10e"/>
    <property type="match status" value="1"/>
</dbReference>
<dbReference type="FunFam" id="3.90.1170.10:FF:000001">
    <property type="entry name" value="50S ribosomal protein L16"/>
    <property type="match status" value="1"/>
</dbReference>
<dbReference type="Gene3D" id="3.90.1170.10">
    <property type="entry name" value="Ribosomal protein L10e/L16"/>
    <property type="match status" value="1"/>
</dbReference>
<dbReference type="HAMAP" id="MF_01342">
    <property type="entry name" value="Ribosomal_uL16"/>
    <property type="match status" value="1"/>
</dbReference>
<dbReference type="InterPro" id="IPR047873">
    <property type="entry name" value="Ribosomal_uL16"/>
</dbReference>
<dbReference type="InterPro" id="IPR000114">
    <property type="entry name" value="Ribosomal_uL16_bact-type"/>
</dbReference>
<dbReference type="InterPro" id="IPR020798">
    <property type="entry name" value="Ribosomal_uL16_CS"/>
</dbReference>
<dbReference type="InterPro" id="IPR016180">
    <property type="entry name" value="Ribosomal_uL16_dom"/>
</dbReference>
<dbReference type="InterPro" id="IPR036920">
    <property type="entry name" value="Ribosomal_uL16_sf"/>
</dbReference>
<dbReference type="NCBIfam" id="TIGR01164">
    <property type="entry name" value="rplP_bact"/>
    <property type="match status" value="1"/>
</dbReference>
<dbReference type="PANTHER" id="PTHR12220">
    <property type="entry name" value="50S/60S RIBOSOMAL PROTEIN L16"/>
    <property type="match status" value="1"/>
</dbReference>
<dbReference type="PANTHER" id="PTHR12220:SF13">
    <property type="entry name" value="LARGE RIBOSOMAL SUBUNIT PROTEIN UL16M"/>
    <property type="match status" value="1"/>
</dbReference>
<dbReference type="Pfam" id="PF00252">
    <property type="entry name" value="Ribosomal_L16"/>
    <property type="match status" value="1"/>
</dbReference>
<dbReference type="PRINTS" id="PR00060">
    <property type="entry name" value="RIBOSOMALL16"/>
</dbReference>
<dbReference type="SUPFAM" id="SSF54686">
    <property type="entry name" value="Ribosomal protein L16p/L10e"/>
    <property type="match status" value="1"/>
</dbReference>
<dbReference type="PROSITE" id="PS00586">
    <property type="entry name" value="RIBOSOMAL_L16_1"/>
    <property type="match status" value="1"/>
</dbReference>
<dbReference type="PROSITE" id="PS00701">
    <property type="entry name" value="RIBOSOMAL_L16_2"/>
    <property type="match status" value="1"/>
</dbReference>
<reference key="1">
    <citation type="journal article" date="2005" name="Nucleic Acids Res.">
        <title>Genome dynamics and diversity of Shigella species, the etiologic agents of bacillary dysentery.</title>
        <authorList>
            <person name="Yang F."/>
            <person name="Yang J."/>
            <person name="Zhang X."/>
            <person name="Chen L."/>
            <person name="Jiang Y."/>
            <person name="Yan Y."/>
            <person name="Tang X."/>
            <person name="Wang J."/>
            <person name="Xiong Z."/>
            <person name="Dong J."/>
            <person name="Xue Y."/>
            <person name="Zhu Y."/>
            <person name="Xu X."/>
            <person name="Sun L."/>
            <person name="Chen S."/>
            <person name="Nie H."/>
            <person name="Peng J."/>
            <person name="Xu J."/>
            <person name="Wang Y."/>
            <person name="Yuan Z."/>
            <person name="Wen Y."/>
            <person name="Yao Z."/>
            <person name="Shen Y."/>
            <person name="Qiang B."/>
            <person name="Hou Y."/>
            <person name="Yu J."/>
            <person name="Jin Q."/>
        </authorList>
    </citation>
    <scope>NUCLEOTIDE SEQUENCE [LARGE SCALE GENOMIC DNA]</scope>
    <source>
        <strain>Sd197</strain>
    </source>
</reference>
<protein>
    <recommendedName>
        <fullName evidence="1">Large ribosomal subunit protein uL16</fullName>
    </recommendedName>
    <alternativeName>
        <fullName evidence="2">50S ribosomal protein L16</fullName>
    </alternativeName>
</protein>
<keyword id="KW-1185">Reference proteome</keyword>
<keyword id="KW-0687">Ribonucleoprotein</keyword>
<keyword id="KW-0689">Ribosomal protein</keyword>
<keyword id="KW-0694">RNA-binding</keyword>
<keyword id="KW-0699">rRNA-binding</keyword>
<keyword id="KW-0820">tRNA-binding</keyword>
<accession>Q32B38</accession>
<organism>
    <name type="scientific">Shigella dysenteriae serotype 1 (strain Sd197)</name>
    <dbReference type="NCBI Taxonomy" id="300267"/>
    <lineage>
        <taxon>Bacteria</taxon>
        <taxon>Pseudomonadati</taxon>
        <taxon>Pseudomonadota</taxon>
        <taxon>Gammaproteobacteria</taxon>
        <taxon>Enterobacterales</taxon>
        <taxon>Enterobacteriaceae</taxon>
        <taxon>Shigella</taxon>
    </lineage>
</organism>
<comment type="function">
    <text evidence="1">Binds 23S rRNA and is also seen to make contacts with the A and possibly P site tRNAs.</text>
</comment>
<comment type="subunit">
    <text evidence="1">Part of the 50S ribosomal subunit.</text>
</comment>
<comment type="similarity">
    <text evidence="1">Belongs to the universal ribosomal protein uL16 family.</text>
</comment>
<feature type="chain" id="PRO_0000062197" description="Large ribosomal subunit protein uL16">
    <location>
        <begin position="1"/>
        <end position="136"/>
    </location>
</feature>
<name>RL16_SHIDS</name>
<proteinExistence type="inferred from homology"/>
<gene>
    <name evidence="1" type="primary">rplP</name>
    <name type="ordered locus">SDY_3489</name>
</gene>
<sequence length="136" mass="15281">MLQPKRTKFRKMHKGRNRGLAQGTDVSFGSFGLKAVGRGRLTARQIEAARRAMTRAVKRQGKIWIRVFPDKPITEKPLAVRMGKGKGNVEYWVALIQPGKVLYEMDGVPEELAREAFKLAAAKLPIKTTFVTKTVM</sequence>
<evidence type="ECO:0000255" key="1">
    <source>
        <dbReference type="HAMAP-Rule" id="MF_01342"/>
    </source>
</evidence>
<evidence type="ECO:0000305" key="2"/>